<comment type="similarity">
    <text evidence="3">Belongs to the peptidase S16 family.</text>
</comment>
<comment type="caution">
    <text evidence="3">Lacks the conserved Ser-Lys catalytic dyad essential for proteolytic activity. Its enzyme activity is therefore unsure.</text>
</comment>
<protein>
    <recommendedName>
        <fullName>Putative lon protease homolog</fullName>
        <ecNumber>3.4.21.-</ecNumber>
    </recommendedName>
    <alternativeName>
        <fullName>ATP-dependent protease La homolog</fullName>
    </alternativeName>
</protein>
<evidence type="ECO:0000255" key="1"/>
<evidence type="ECO:0000256" key="2">
    <source>
        <dbReference type="SAM" id="MobiDB-lite"/>
    </source>
</evidence>
<evidence type="ECO:0000305" key="3"/>
<gene>
    <name type="ordered locus">MTH_892</name>
</gene>
<keyword id="KW-0067">ATP-binding</keyword>
<keyword id="KW-0378">Hydrolase</keyword>
<keyword id="KW-0547">Nucleotide-binding</keyword>
<keyword id="KW-0645">Protease</keyword>
<keyword id="KW-1185">Reference proteome</keyword>
<keyword id="KW-0720">Serine protease</keyword>
<feature type="chain" id="PRO_0000076156" description="Putative lon protease homolog">
    <location>
        <begin position="1"/>
        <end position="501"/>
    </location>
</feature>
<feature type="region of interest" description="Disordered" evidence="2">
    <location>
        <begin position="481"/>
        <end position="501"/>
    </location>
</feature>
<feature type="compositionally biased region" description="Polar residues" evidence="2">
    <location>
        <begin position="481"/>
        <end position="494"/>
    </location>
</feature>
<feature type="binding site" evidence="1">
    <location>
        <begin position="53"/>
        <end position="60"/>
    </location>
    <ligand>
        <name>ATP</name>
        <dbReference type="ChEBI" id="CHEBI:30616"/>
    </ligand>
</feature>
<reference key="1">
    <citation type="journal article" date="1997" name="J. Bacteriol.">
        <title>Complete genome sequence of Methanobacterium thermoautotrophicum deltaH: functional analysis and comparative genomics.</title>
        <authorList>
            <person name="Smith D.R."/>
            <person name="Doucette-Stamm L.A."/>
            <person name="Deloughery C."/>
            <person name="Lee H.-M."/>
            <person name="Dubois J."/>
            <person name="Aldredge T."/>
            <person name="Bashirzadeh R."/>
            <person name="Blakely D."/>
            <person name="Cook R."/>
            <person name="Gilbert K."/>
            <person name="Harrison D."/>
            <person name="Hoang L."/>
            <person name="Keagle P."/>
            <person name="Lumm W."/>
            <person name="Pothier B."/>
            <person name="Qiu D."/>
            <person name="Spadafora R."/>
            <person name="Vicare R."/>
            <person name="Wang Y."/>
            <person name="Wierzbowski J."/>
            <person name="Gibson R."/>
            <person name="Jiwani N."/>
            <person name="Caruso A."/>
            <person name="Bush D."/>
            <person name="Safer H."/>
            <person name="Patwell D."/>
            <person name="Prabhakar S."/>
            <person name="McDougall S."/>
            <person name="Shimer G."/>
            <person name="Goyal A."/>
            <person name="Pietrovski S."/>
            <person name="Church G.M."/>
            <person name="Daniels C.J."/>
            <person name="Mao J.-I."/>
            <person name="Rice P."/>
            <person name="Noelling J."/>
            <person name="Reeve J.N."/>
        </authorList>
    </citation>
    <scope>NUCLEOTIDE SEQUENCE [LARGE SCALE GENOMIC DNA]</scope>
    <source>
        <strain>ATCC 29096 / DSM 1053 / JCM 10044 / NBRC 100330 / Delta H</strain>
    </source>
</reference>
<accession>O26978</accession>
<proteinExistence type="inferred from homology"/>
<dbReference type="EC" id="3.4.21.-"/>
<dbReference type="EMBL" id="AE000666">
    <property type="protein sequence ID" value="AAB85390.1"/>
    <property type="molecule type" value="Genomic_DNA"/>
</dbReference>
<dbReference type="PIR" id="C69219">
    <property type="entry name" value="C69219"/>
</dbReference>
<dbReference type="RefSeq" id="WP_010876525.1">
    <property type="nucleotide sequence ID" value="NC_000916.1"/>
</dbReference>
<dbReference type="SMR" id="O26978"/>
<dbReference type="STRING" id="187420.MTH_892"/>
<dbReference type="PaxDb" id="187420-MTH_892"/>
<dbReference type="EnsemblBacteria" id="AAB85390">
    <property type="protein sequence ID" value="AAB85390"/>
    <property type="gene ID" value="MTH_892"/>
</dbReference>
<dbReference type="GeneID" id="1471300"/>
<dbReference type="KEGG" id="mth:MTH_892"/>
<dbReference type="PATRIC" id="fig|187420.15.peg.877"/>
<dbReference type="HOGENOM" id="CLU_550564_0_0_2"/>
<dbReference type="InParanoid" id="O26978"/>
<dbReference type="Proteomes" id="UP000005223">
    <property type="component" value="Chromosome"/>
</dbReference>
<dbReference type="GO" id="GO:0005524">
    <property type="term" value="F:ATP binding"/>
    <property type="evidence" value="ECO:0007669"/>
    <property type="project" value="UniProtKB-KW"/>
</dbReference>
<dbReference type="GO" id="GO:0016887">
    <property type="term" value="F:ATP hydrolysis activity"/>
    <property type="evidence" value="ECO:0007669"/>
    <property type="project" value="InterPro"/>
</dbReference>
<dbReference type="GO" id="GO:0008236">
    <property type="term" value="F:serine-type peptidase activity"/>
    <property type="evidence" value="ECO:0007669"/>
    <property type="project" value="UniProtKB-KW"/>
</dbReference>
<dbReference type="GO" id="GO:0006508">
    <property type="term" value="P:proteolysis"/>
    <property type="evidence" value="ECO:0007669"/>
    <property type="project" value="UniProtKB-KW"/>
</dbReference>
<dbReference type="Gene3D" id="1.10.8.60">
    <property type="match status" value="1"/>
</dbReference>
<dbReference type="Gene3D" id="3.40.50.300">
    <property type="entry name" value="P-loop containing nucleotide triphosphate hydrolases"/>
    <property type="match status" value="2"/>
</dbReference>
<dbReference type="InterPro" id="IPR003593">
    <property type="entry name" value="AAA+_ATPase"/>
</dbReference>
<dbReference type="InterPro" id="IPR050764">
    <property type="entry name" value="CbbQ/NirQ/NorQ/GpvN"/>
</dbReference>
<dbReference type="InterPro" id="IPR000523">
    <property type="entry name" value="Mg_chelatse_chII-like_cat_dom"/>
</dbReference>
<dbReference type="InterPro" id="IPR027417">
    <property type="entry name" value="P-loop_NTPase"/>
</dbReference>
<dbReference type="PANTHER" id="PTHR42759:SF1">
    <property type="entry name" value="MAGNESIUM-CHELATASE SUBUNIT CHLD"/>
    <property type="match status" value="1"/>
</dbReference>
<dbReference type="PANTHER" id="PTHR42759">
    <property type="entry name" value="MOXR FAMILY PROTEIN"/>
    <property type="match status" value="1"/>
</dbReference>
<dbReference type="Pfam" id="PF01078">
    <property type="entry name" value="Mg_chelatase"/>
    <property type="match status" value="1"/>
</dbReference>
<dbReference type="SMART" id="SM00382">
    <property type="entry name" value="AAA"/>
    <property type="match status" value="1"/>
</dbReference>
<dbReference type="SUPFAM" id="SSF52540">
    <property type="entry name" value="P-loop containing nucleoside triphosphate hydrolases"/>
    <property type="match status" value="1"/>
</dbReference>
<name>LONH_METTH</name>
<organism>
    <name type="scientific">Methanothermobacter thermautotrophicus (strain ATCC 29096 / DSM 1053 / JCM 10044 / NBRC 100330 / Delta H)</name>
    <name type="common">Methanobacterium thermoautotrophicum</name>
    <dbReference type="NCBI Taxonomy" id="187420"/>
    <lineage>
        <taxon>Archaea</taxon>
        <taxon>Methanobacteriati</taxon>
        <taxon>Methanobacteriota</taxon>
        <taxon>Methanomada group</taxon>
        <taxon>Methanobacteria</taxon>
        <taxon>Methanobacteriales</taxon>
        <taxon>Methanobacteriaceae</taxon>
        <taxon>Methanothermobacter</taxon>
    </lineage>
</organism>
<sequence>MYVDMNREYLKDINTTEDVKIPEDPLERVIGHEDVMPMIKIAAKQRRHLLLVGPPGIGKSLLAQAISFHLPEPSEEITVVHNPERPERPFVEIKNRKEIEDEILEIERAEGELIDPQSAPDAVAERLGFKCIHCGEYSSAYNSICPRCGGDKFSHIKARRKHIGDLLGMFEMSSGSLSVPQKRVTTTRIIDGVEEVVIYERVGGEEIKVLDQRALEKRRQIVEEKPRNVIVPLDRKTFVQATGASETELLGDVRHDPYGGHPDLGSQPYERVVPGAIHEAHEGVLFIDEIVHIAGLQRFIFSAMQDKTFPIVGRNPQSAGSSVKVDEVPCDFIFVGACNIADLQYILPPLRSRIQGEGYELLLNTTMPDTDENRAKIAQFVAQEIELDGKIPHARAAAVELLIEEARRRARAVDDVDNALTLRLRDLGGVVRMAGDLAVMDGSPYIETRHMEVAIRKAVSVEDQIIRRYKSYEKALEKDLSSSQRMSQHGYSSENIDRSYM</sequence>